<organism>
    <name type="scientific">Staphylococcus carnosus (strain TM300)</name>
    <dbReference type="NCBI Taxonomy" id="396513"/>
    <lineage>
        <taxon>Bacteria</taxon>
        <taxon>Bacillati</taxon>
        <taxon>Bacillota</taxon>
        <taxon>Bacilli</taxon>
        <taxon>Bacillales</taxon>
        <taxon>Staphylococcaceae</taxon>
        <taxon>Staphylococcus</taxon>
    </lineage>
</organism>
<accession>B9DNH1</accession>
<protein>
    <recommendedName>
        <fullName evidence="1">Putative pre-16S rRNA nuclease</fullName>
        <ecNumber evidence="1">3.1.-.-</ecNumber>
    </recommendedName>
</protein>
<keyword id="KW-0963">Cytoplasm</keyword>
<keyword id="KW-0378">Hydrolase</keyword>
<keyword id="KW-0540">Nuclease</keyword>
<keyword id="KW-1185">Reference proteome</keyword>
<keyword id="KW-0690">Ribosome biogenesis</keyword>
<comment type="function">
    <text evidence="1">Could be a nuclease involved in processing of the 5'-end of pre-16S rRNA.</text>
</comment>
<comment type="subcellular location">
    <subcellularLocation>
        <location evidence="1">Cytoplasm</location>
    </subcellularLocation>
</comment>
<comment type="similarity">
    <text evidence="1">Belongs to the YqgF nuclease family.</text>
</comment>
<name>YQGF_STACT</name>
<feature type="chain" id="PRO_1000147491" description="Putative pre-16S rRNA nuclease">
    <location>
        <begin position="1"/>
        <end position="142"/>
    </location>
</feature>
<dbReference type="EC" id="3.1.-.-" evidence="1"/>
<dbReference type="EMBL" id="AM295250">
    <property type="protein sequence ID" value="CAL28135.1"/>
    <property type="molecule type" value="Genomic_DNA"/>
</dbReference>
<dbReference type="RefSeq" id="WP_015900475.1">
    <property type="nucleotide sequence ID" value="NC_012121.1"/>
</dbReference>
<dbReference type="SMR" id="B9DNH1"/>
<dbReference type="GeneID" id="93793653"/>
<dbReference type="KEGG" id="sca:SCA_1228"/>
<dbReference type="eggNOG" id="COG0816">
    <property type="taxonomic scope" value="Bacteria"/>
</dbReference>
<dbReference type="HOGENOM" id="CLU_098240_2_0_9"/>
<dbReference type="OrthoDB" id="9796140at2"/>
<dbReference type="BioCyc" id="SCAR396513:SCA_RS06145-MONOMER"/>
<dbReference type="Proteomes" id="UP000000444">
    <property type="component" value="Chromosome"/>
</dbReference>
<dbReference type="GO" id="GO:0005829">
    <property type="term" value="C:cytosol"/>
    <property type="evidence" value="ECO:0007669"/>
    <property type="project" value="TreeGrafter"/>
</dbReference>
<dbReference type="GO" id="GO:0004518">
    <property type="term" value="F:nuclease activity"/>
    <property type="evidence" value="ECO:0007669"/>
    <property type="project" value="UniProtKB-KW"/>
</dbReference>
<dbReference type="GO" id="GO:0000967">
    <property type="term" value="P:rRNA 5'-end processing"/>
    <property type="evidence" value="ECO:0007669"/>
    <property type="project" value="UniProtKB-UniRule"/>
</dbReference>
<dbReference type="CDD" id="cd16964">
    <property type="entry name" value="YqgF"/>
    <property type="match status" value="1"/>
</dbReference>
<dbReference type="FunFam" id="3.30.420.140:FF:000003">
    <property type="entry name" value="Putative pre-16S rRNA nuclease"/>
    <property type="match status" value="1"/>
</dbReference>
<dbReference type="Gene3D" id="3.30.420.140">
    <property type="entry name" value="YqgF/RNase H-like domain"/>
    <property type="match status" value="1"/>
</dbReference>
<dbReference type="HAMAP" id="MF_00651">
    <property type="entry name" value="Nuclease_YqgF"/>
    <property type="match status" value="1"/>
</dbReference>
<dbReference type="InterPro" id="IPR012337">
    <property type="entry name" value="RNaseH-like_sf"/>
</dbReference>
<dbReference type="InterPro" id="IPR005227">
    <property type="entry name" value="YqgF"/>
</dbReference>
<dbReference type="InterPro" id="IPR006641">
    <property type="entry name" value="YqgF/RNaseH-like_dom"/>
</dbReference>
<dbReference type="InterPro" id="IPR037027">
    <property type="entry name" value="YqgF/RNaseH-like_dom_sf"/>
</dbReference>
<dbReference type="NCBIfam" id="TIGR00250">
    <property type="entry name" value="RNAse_H_YqgF"/>
    <property type="match status" value="1"/>
</dbReference>
<dbReference type="PANTHER" id="PTHR33317">
    <property type="entry name" value="POLYNUCLEOTIDYL TRANSFERASE, RIBONUCLEASE H-LIKE SUPERFAMILY PROTEIN"/>
    <property type="match status" value="1"/>
</dbReference>
<dbReference type="PANTHER" id="PTHR33317:SF4">
    <property type="entry name" value="POLYNUCLEOTIDYL TRANSFERASE, RIBONUCLEASE H-LIKE SUPERFAMILY PROTEIN"/>
    <property type="match status" value="1"/>
</dbReference>
<dbReference type="Pfam" id="PF03652">
    <property type="entry name" value="RuvX"/>
    <property type="match status" value="1"/>
</dbReference>
<dbReference type="SMART" id="SM00732">
    <property type="entry name" value="YqgFc"/>
    <property type="match status" value="1"/>
</dbReference>
<dbReference type="SUPFAM" id="SSF53098">
    <property type="entry name" value="Ribonuclease H-like"/>
    <property type="match status" value="1"/>
</dbReference>
<proteinExistence type="inferred from homology"/>
<gene>
    <name type="ordered locus">Sca_1228</name>
</gene>
<evidence type="ECO:0000255" key="1">
    <source>
        <dbReference type="HAMAP-Rule" id="MF_00651"/>
    </source>
</evidence>
<sequence>MLTHKIIGLDVGSKTVGVAVSDLMGWTAQGLDTLRINEEENELGITKLAEIIKKEDADTVVIGLPKNMNNSIGFRGEASLKYKEELLKILPDINVVMWDERLSTMAAERSLLEADVSRSKRKKVIDKMAAVFILQGYLDSLQ</sequence>
<reference key="1">
    <citation type="journal article" date="2009" name="Appl. Environ. Microbiol.">
        <title>Genome analysis of the meat starter culture bacterium Staphylococcus carnosus TM300.</title>
        <authorList>
            <person name="Rosenstein R."/>
            <person name="Nerz C."/>
            <person name="Biswas L."/>
            <person name="Resch A."/>
            <person name="Raddatz G."/>
            <person name="Schuster S.C."/>
            <person name="Goetz F."/>
        </authorList>
    </citation>
    <scope>NUCLEOTIDE SEQUENCE [LARGE SCALE GENOMIC DNA]</scope>
    <source>
        <strain>TM300</strain>
    </source>
</reference>